<evidence type="ECO:0000250" key="1"/>
<evidence type="ECO:0000255" key="2">
    <source>
        <dbReference type="HAMAP-Rule" id="MF_00062"/>
    </source>
</evidence>
<organism>
    <name type="scientific">Escherichia coli (strain ATCC 8739 / DSM 1576 / NBRC 3972 / NCIMB 8545 / WDCM 00012 / Crooks)</name>
    <dbReference type="NCBI Taxonomy" id="481805"/>
    <lineage>
        <taxon>Bacteria</taxon>
        <taxon>Pseudomonadati</taxon>
        <taxon>Pseudomonadota</taxon>
        <taxon>Gammaproteobacteria</taxon>
        <taxon>Enterobacterales</taxon>
        <taxon>Enterobacteriaceae</taxon>
        <taxon>Escherichia</taxon>
    </lineage>
</organism>
<keyword id="KW-0067">ATP-binding</keyword>
<keyword id="KW-0342">GTP-binding</keyword>
<keyword id="KW-0547">Nucleotide-binding</keyword>
<keyword id="KW-0548">Nucleotidyltransferase</keyword>
<keyword id="KW-0808">Transferase</keyword>
<reference key="1">
    <citation type="submission" date="2008-02" db="EMBL/GenBank/DDBJ databases">
        <title>Complete sequence of Escherichia coli C str. ATCC 8739.</title>
        <authorList>
            <person name="Copeland A."/>
            <person name="Lucas S."/>
            <person name="Lapidus A."/>
            <person name="Glavina del Rio T."/>
            <person name="Dalin E."/>
            <person name="Tice H."/>
            <person name="Bruce D."/>
            <person name="Goodwin L."/>
            <person name="Pitluck S."/>
            <person name="Kiss H."/>
            <person name="Brettin T."/>
            <person name="Detter J.C."/>
            <person name="Han C."/>
            <person name="Kuske C.R."/>
            <person name="Schmutz J."/>
            <person name="Larimer F."/>
            <person name="Land M."/>
            <person name="Hauser L."/>
            <person name="Kyrpides N."/>
            <person name="Mikhailova N."/>
            <person name="Ingram L."/>
            <person name="Richardson P."/>
        </authorList>
    </citation>
    <scope>NUCLEOTIDE SEQUENCE [LARGE SCALE GENOMIC DNA]</scope>
    <source>
        <strain>ATCC 8739 / DSM 1576 / NBRC 3972 / NCIMB 8545 / WDCM 00012 / Crooks</strain>
    </source>
</reference>
<gene>
    <name evidence="2" type="primary">cysN</name>
    <name type="ordered locus">EcolC_0961</name>
</gene>
<proteinExistence type="inferred from homology"/>
<feature type="chain" id="PRO_1000075065" description="Sulfate adenylyltransferase subunit 1">
    <location>
        <begin position="1"/>
        <end position="475"/>
    </location>
</feature>
<feature type="domain" description="tr-type G">
    <location>
        <begin position="25"/>
        <end position="239"/>
    </location>
</feature>
<feature type="region of interest" description="G1" evidence="1">
    <location>
        <begin position="34"/>
        <end position="41"/>
    </location>
</feature>
<feature type="region of interest" description="G2" evidence="1">
    <location>
        <begin position="92"/>
        <end position="96"/>
    </location>
</feature>
<feature type="region of interest" description="G3" evidence="1">
    <location>
        <begin position="113"/>
        <end position="116"/>
    </location>
</feature>
<feature type="region of interest" description="G4" evidence="1">
    <location>
        <begin position="168"/>
        <end position="171"/>
    </location>
</feature>
<feature type="region of interest" description="G5" evidence="1">
    <location>
        <begin position="206"/>
        <end position="208"/>
    </location>
</feature>
<feature type="binding site" evidence="2">
    <location>
        <begin position="34"/>
        <end position="41"/>
    </location>
    <ligand>
        <name>GTP</name>
        <dbReference type="ChEBI" id="CHEBI:37565"/>
    </ligand>
</feature>
<feature type="binding site" evidence="2">
    <location>
        <begin position="113"/>
        <end position="117"/>
    </location>
    <ligand>
        <name>GTP</name>
        <dbReference type="ChEBI" id="CHEBI:37565"/>
    </ligand>
</feature>
<feature type="binding site" evidence="2">
    <location>
        <begin position="168"/>
        <end position="171"/>
    </location>
    <ligand>
        <name>GTP</name>
        <dbReference type="ChEBI" id="CHEBI:37565"/>
    </ligand>
</feature>
<protein>
    <recommendedName>
        <fullName evidence="2">Sulfate adenylyltransferase subunit 1</fullName>
        <ecNumber evidence="2">2.7.7.4</ecNumber>
    </recommendedName>
    <alternativeName>
        <fullName evidence="2">ATP-sulfurylase large subunit</fullName>
    </alternativeName>
    <alternativeName>
        <fullName evidence="2">Sulfate adenylate transferase</fullName>
        <shortName evidence="2">SAT</shortName>
    </alternativeName>
</protein>
<dbReference type="EC" id="2.7.7.4" evidence="2"/>
<dbReference type="EMBL" id="CP000946">
    <property type="protein sequence ID" value="ACA76630.1"/>
    <property type="molecule type" value="Genomic_DNA"/>
</dbReference>
<dbReference type="RefSeq" id="WP_001090386.1">
    <property type="nucleotide sequence ID" value="NZ_MTFT01000049.1"/>
</dbReference>
<dbReference type="SMR" id="B1IUS8"/>
<dbReference type="KEGG" id="ecl:EcolC_0961"/>
<dbReference type="HOGENOM" id="CLU_007265_5_2_6"/>
<dbReference type="UniPathway" id="UPA00140">
    <property type="reaction ID" value="UER00204"/>
</dbReference>
<dbReference type="GO" id="GO:0005524">
    <property type="term" value="F:ATP binding"/>
    <property type="evidence" value="ECO:0007669"/>
    <property type="project" value="UniProtKB-KW"/>
</dbReference>
<dbReference type="GO" id="GO:0005525">
    <property type="term" value="F:GTP binding"/>
    <property type="evidence" value="ECO:0007669"/>
    <property type="project" value="UniProtKB-UniRule"/>
</dbReference>
<dbReference type="GO" id="GO:0003924">
    <property type="term" value="F:GTPase activity"/>
    <property type="evidence" value="ECO:0007669"/>
    <property type="project" value="InterPro"/>
</dbReference>
<dbReference type="GO" id="GO:0004781">
    <property type="term" value="F:sulfate adenylyltransferase (ATP) activity"/>
    <property type="evidence" value="ECO:0007669"/>
    <property type="project" value="UniProtKB-UniRule"/>
</dbReference>
<dbReference type="GO" id="GO:0070814">
    <property type="term" value="P:hydrogen sulfide biosynthetic process"/>
    <property type="evidence" value="ECO:0007669"/>
    <property type="project" value="UniProtKB-UniRule"/>
</dbReference>
<dbReference type="GO" id="GO:0000103">
    <property type="term" value="P:sulfate assimilation"/>
    <property type="evidence" value="ECO:0007669"/>
    <property type="project" value="UniProtKB-UniRule"/>
</dbReference>
<dbReference type="CDD" id="cd04166">
    <property type="entry name" value="CysN_ATPS"/>
    <property type="match status" value="1"/>
</dbReference>
<dbReference type="CDD" id="cd03695">
    <property type="entry name" value="CysN_NodQ_II"/>
    <property type="match status" value="1"/>
</dbReference>
<dbReference type="CDD" id="cd04095">
    <property type="entry name" value="CysN_NoDQ_III"/>
    <property type="match status" value="1"/>
</dbReference>
<dbReference type="FunFam" id="2.40.30.10:FF:000027">
    <property type="entry name" value="Sulfate adenylyltransferase subunit 1"/>
    <property type="match status" value="1"/>
</dbReference>
<dbReference type="FunFam" id="2.40.30.10:FF:000031">
    <property type="entry name" value="Sulfate adenylyltransferase subunit 1"/>
    <property type="match status" value="1"/>
</dbReference>
<dbReference type="FunFam" id="3.40.50.300:FF:000119">
    <property type="entry name" value="Sulfate adenylyltransferase subunit 1"/>
    <property type="match status" value="1"/>
</dbReference>
<dbReference type="Gene3D" id="3.40.50.300">
    <property type="entry name" value="P-loop containing nucleotide triphosphate hydrolases"/>
    <property type="match status" value="1"/>
</dbReference>
<dbReference type="Gene3D" id="2.40.30.10">
    <property type="entry name" value="Translation factors"/>
    <property type="match status" value="2"/>
</dbReference>
<dbReference type="HAMAP" id="MF_00062">
    <property type="entry name" value="Sulf_adenylyltr_sub1"/>
    <property type="match status" value="1"/>
</dbReference>
<dbReference type="InterPro" id="IPR041757">
    <property type="entry name" value="CysN_GTP-bd"/>
</dbReference>
<dbReference type="InterPro" id="IPR044138">
    <property type="entry name" value="CysN_II"/>
</dbReference>
<dbReference type="InterPro" id="IPR044139">
    <property type="entry name" value="CysN_NoDQ_III"/>
</dbReference>
<dbReference type="InterPro" id="IPR031157">
    <property type="entry name" value="G_TR_CS"/>
</dbReference>
<dbReference type="InterPro" id="IPR054696">
    <property type="entry name" value="GTP-eEF1A_C"/>
</dbReference>
<dbReference type="InterPro" id="IPR027417">
    <property type="entry name" value="P-loop_NTPase"/>
</dbReference>
<dbReference type="InterPro" id="IPR005225">
    <property type="entry name" value="Small_GTP-bd"/>
</dbReference>
<dbReference type="InterPro" id="IPR011779">
    <property type="entry name" value="SO4_adenylTrfase_lsu"/>
</dbReference>
<dbReference type="InterPro" id="IPR000795">
    <property type="entry name" value="T_Tr_GTP-bd_dom"/>
</dbReference>
<dbReference type="InterPro" id="IPR050100">
    <property type="entry name" value="TRAFAC_GTPase_members"/>
</dbReference>
<dbReference type="InterPro" id="IPR009000">
    <property type="entry name" value="Transl_B-barrel_sf"/>
</dbReference>
<dbReference type="InterPro" id="IPR009001">
    <property type="entry name" value="Transl_elong_EF1A/Init_IF2_C"/>
</dbReference>
<dbReference type="NCBIfam" id="TIGR02034">
    <property type="entry name" value="CysN"/>
    <property type="match status" value="1"/>
</dbReference>
<dbReference type="NCBIfam" id="NF003478">
    <property type="entry name" value="PRK05124.1"/>
    <property type="match status" value="1"/>
</dbReference>
<dbReference type="NCBIfam" id="TIGR00231">
    <property type="entry name" value="small_GTP"/>
    <property type="match status" value="1"/>
</dbReference>
<dbReference type="PANTHER" id="PTHR23115">
    <property type="entry name" value="TRANSLATION FACTOR"/>
    <property type="match status" value="1"/>
</dbReference>
<dbReference type="Pfam" id="PF22594">
    <property type="entry name" value="GTP-eEF1A_C"/>
    <property type="match status" value="1"/>
</dbReference>
<dbReference type="Pfam" id="PF00009">
    <property type="entry name" value="GTP_EFTU"/>
    <property type="match status" value="1"/>
</dbReference>
<dbReference type="PRINTS" id="PR00315">
    <property type="entry name" value="ELONGATNFCT"/>
</dbReference>
<dbReference type="SUPFAM" id="SSF50465">
    <property type="entry name" value="EF-Tu/eEF-1alpha/eIF2-gamma C-terminal domain"/>
    <property type="match status" value="1"/>
</dbReference>
<dbReference type="SUPFAM" id="SSF52540">
    <property type="entry name" value="P-loop containing nucleoside triphosphate hydrolases"/>
    <property type="match status" value="1"/>
</dbReference>
<dbReference type="SUPFAM" id="SSF50447">
    <property type="entry name" value="Translation proteins"/>
    <property type="match status" value="1"/>
</dbReference>
<dbReference type="PROSITE" id="PS00301">
    <property type="entry name" value="G_TR_1"/>
    <property type="match status" value="1"/>
</dbReference>
<dbReference type="PROSITE" id="PS51722">
    <property type="entry name" value="G_TR_2"/>
    <property type="match status" value="1"/>
</dbReference>
<sequence length="475" mass="52531">MNTALAQQIANEGGVEAWMIAQQHKSLLRFLTCGSVDDGKSTLIGRLLHDTRQIYEDQLSSLHNDSKRHGTQGEKLDLALLVDGLQAEREQGITIDVAYRYFSTEKRKFIIADTPGHEQYTRNMATGASTCELAILLIDARKGVLDQTRRHSFISTLLGIKHLVVAINKMDLVDYSEKTFTRIREDYLTFAGQLPGNLDIRFVPLSALEGDNVASQSESMAWYSGPTLLEVLETVEIQRVVDAQPMRFPVQYVNRPNLDFRGYAGTLASGRVEVGQRVKVLPSGVESNVARIVTFDGDREEAFAGEAITLVLTDEIDISRGDLLLAADEALPAVQSASVDVVWMAEQPLSPGQSYDIKIAGKKTRARVDGIRYQVDINNLTQREVENLPLNGIGLVDLTFDEPLVLDRYQQNPVTGGLIFIDRLSNVTVGAGMVHEPVSQATAAPSEFSAFELELNALVRRHFPHWGARDLLGDK</sequence>
<accession>B1IUS8</accession>
<name>CYSN_ECOLC</name>
<comment type="function">
    <text evidence="2">With CysD forms the ATP sulfurylase (ATPS) that catalyzes the adenylation of sulfate producing adenosine 5'-phosphosulfate (APS) and diphosphate, the first enzymatic step in sulfur assimilation pathway. APS synthesis involves the formation of a high-energy phosphoric-sulfuric acid anhydride bond driven by GTP hydrolysis by CysN coupled to ATP hydrolysis by CysD.</text>
</comment>
<comment type="catalytic activity">
    <reaction evidence="2">
        <text>sulfate + ATP + H(+) = adenosine 5'-phosphosulfate + diphosphate</text>
        <dbReference type="Rhea" id="RHEA:18133"/>
        <dbReference type="ChEBI" id="CHEBI:15378"/>
        <dbReference type="ChEBI" id="CHEBI:16189"/>
        <dbReference type="ChEBI" id="CHEBI:30616"/>
        <dbReference type="ChEBI" id="CHEBI:33019"/>
        <dbReference type="ChEBI" id="CHEBI:58243"/>
        <dbReference type="EC" id="2.7.7.4"/>
    </reaction>
</comment>
<comment type="pathway">
    <text evidence="2">Sulfur metabolism; hydrogen sulfide biosynthesis; sulfite from sulfate: step 1/3.</text>
</comment>
<comment type="subunit">
    <text evidence="2">Heterodimer composed of CysD, the smaller subunit, and CysN.</text>
</comment>
<comment type="similarity">
    <text evidence="2">Belongs to the TRAFAC class translation factor GTPase superfamily. Classic translation factor GTPase family. CysN/NodQ subfamily.</text>
</comment>